<reference key="1">
    <citation type="journal article" date="2006" name="J. Virol.">
        <title>Genome of invertebrate iridescent virus type 3 (mosquito iridescent virus).</title>
        <authorList>
            <person name="Delhon G."/>
            <person name="Tulman E.R."/>
            <person name="Afonso C.L."/>
            <person name="Lu Z."/>
            <person name="Becnel J.J."/>
            <person name="Moser B.A."/>
            <person name="Kutish G.F."/>
            <person name="Rock D.L."/>
        </authorList>
    </citation>
    <scope>NUCLEOTIDE SEQUENCE [LARGE SCALE GENOMIC DNA]</scope>
</reference>
<dbReference type="EMBL" id="DQ643392">
    <property type="protein sequence ID" value="ABF82069.1"/>
    <property type="molecule type" value="Genomic_DNA"/>
</dbReference>
<dbReference type="RefSeq" id="YP_654611.1">
    <property type="nucleotide sequence ID" value="NC_008187.1"/>
</dbReference>
<dbReference type="KEGG" id="vg:4156349"/>
<dbReference type="OrthoDB" id="7735at10239"/>
<dbReference type="Proteomes" id="UP000001358">
    <property type="component" value="Genome"/>
</dbReference>
<name>ICP46_IIV3</name>
<sequence length="443" mass="51751">MTTQTSTKYSIEVVDYDADLVLQCATIQSTFESPSRDSARSKVSITTETEEKSEDELRSIRGTVVESTTQKPIIQGSFFPYEFSEHEQEELKEKMAQLNHCLEDCELDYSFEGTIIRVFYYKKWYISTHRKLNADRSKWGSNVSFKRLFEQGLADSYGLSLNELYQQLNLRCNYTFLITADENTRFVCVPNTAKKVYFIRSNDPQERFITVAKPPKPPQSLTRVEQIFAWVKALQYPYTYQGLLLTHKSGSQYRIINNEYATLFKVRNNEQSIPYRYLQLRVAQDDASIALLKQLFPQYTATFQSHEQSVDWLVDVIYHEYTKRKQRSLLPSDLTTTPQIDQRMYLFIKNKLINKGVITKERIKALLWMEEPSNLNQMIRLVNHMRHVREKSRSPQLEADLARLNLNSSPNTTLPDGDGVPKRKKIKYSKIPVELTFKKPSPF</sequence>
<accession>Q197C1</accession>
<organismHost>
    <name type="scientific">Aedes vexans</name>
    <name type="common">Inland floodwater mosquito</name>
    <name type="synonym">Culex vexans</name>
    <dbReference type="NCBI Taxonomy" id="7163"/>
</organismHost>
<organismHost>
    <name type="scientific">Culex territans</name>
    <dbReference type="NCBI Taxonomy" id="42431"/>
</organismHost>
<organismHost>
    <name type="scientific">Culiseta annulata</name>
    <dbReference type="NCBI Taxonomy" id="332058"/>
</organismHost>
<organismHost>
    <name type="scientific">Ochlerotatus sollicitans</name>
    <name type="common">eastern saltmarsh mosquito</name>
    <dbReference type="NCBI Taxonomy" id="310513"/>
</organismHost>
<organismHost>
    <name type="scientific">Ochlerotatus taeniorhynchus</name>
    <name type="common">Black salt marsh mosquito</name>
    <name type="synonym">Aedes taeniorhynchus</name>
    <dbReference type="NCBI Taxonomy" id="329105"/>
</organismHost>
<organismHost>
    <name type="scientific">Psorophora ferox</name>
    <dbReference type="NCBI Taxonomy" id="7183"/>
</organismHost>
<feature type="chain" id="PRO_0000377756" description="Immediate-early protein ICP-46 homolog">
    <location>
        <begin position="1"/>
        <end position="443"/>
    </location>
</feature>
<feature type="coiled-coil region" evidence="1">
    <location>
        <begin position="82"/>
        <end position="110"/>
    </location>
</feature>
<proteinExistence type="inferred from homology"/>
<evidence type="ECO:0000255" key="1"/>
<evidence type="ECO:0000305" key="2"/>
<keyword id="KW-0175">Coiled coil</keyword>
<keyword id="KW-1185">Reference proteome</keyword>
<comment type="similarity">
    <text evidence="2">Belongs to the IIV-6 393L family.</text>
</comment>
<organism>
    <name type="scientific">Invertebrate iridescent virus 3</name>
    <name type="common">IIV-3</name>
    <name type="synonym">Mosquito iridescent virus</name>
    <dbReference type="NCBI Taxonomy" id="345201"/>
    <lineage>
        <taxon>Viruses</taxon>
        <taxon>Varidnaviria</taxon>
        <taxon>Bamfordvirae</taxon>
        <taxon>Nucleocytoviricota</taxon>
        <taxon>Megaviricetes</taxon>
        <taxon>Pimascovirales</taxon>
        <taxon>Iridoviridae</taxon>
        <taxon>Betairidovirinae</taxon>
        <taxon>Chloriridovirus</taxon>
    </lineage>
</organism>
<protein>
    <recommendedName>
        <fullName>Immediate-early protein ICP-46 homolog</fullName>
    </recommendedName>
</protein>
<gene>
    <name type="ORF">IIV3-039R</name>
</gene>